<dbReference type="EC" id="2.3.1.-"/>
<dbReference type="EMBL" id="AK092119">
    <property type="protein sequence ID" value="BAG52484.1"/>
    <property type="molecule type" value="mRNA"/>
</dbReference>
<dbReference type="EMBL" id="AK096556">
    <property type="protein sequence ID" value="BAC04815.1"/>
    <property type="molecule type" value="mRNA"/>
</dbReference>
<dbReference type="EMBL" id="AC004876">
    <property type="status" value="NOT_ANNOTATED_CDS"/>
    <property type="molecule type" value="Genomic_DNA"/>
</dbReference>
<dbReference type="EMBL" id="BC104841">
    <property type="protein sequence ID" value="AAI04842.1"/>
    <property type="molecule type" value="mRNA"/>
</dbReference>
<dbReference type="EMBL" id="AL831911">
    <property type="protein sequence ID" value="CAD38574.3"/>
    <property type="molecule type" value="mRNA"/>
</dbReference>
<dbReference type="CCDS" id="CCDS5713.1">
    <molecule id="Q8N8M0-1"/>
</dbReference>
<dbReference type="RefSeq" id="NP_001356623.1">
    <molecule id="Q8N8M0-1"/>
    <property type="nucleotide sequence ID" value="NM_001369694.1"/>
</dbReference>
<dbReference type="RefSeq" id="NP_001356624.1">
    <molecule id="Q8N8M0-1"/>
    <property type="nucleotide sequence ID" value="NM_001369695.1"/>
</dbReference>
<dbReference type="RefSeq" id="NP_940973.2">
    <molecule id="Q8N8M0-1"/>
    <property type="nucleotide sequence ID" value="NM_198571.3"/>
</dbReference>
<dbReference type="RefSeq" id="XP_005250382.1">
    <property type="nucleotide sequence ID" value="XM_005250325.1"/>
</dbReference>
<dbReference type="RefSeq" id="XP_011514470.1">
    <property type="nucleotide sequence ID" value="XM_011516168.1"/>
</dbReference>
<dbReference type="SMR" id="Q8N8M0"/>
<dbReference type="BioGRID" id="131987">
    <property type="interactions" value="74"/>
</dbReference>
<dbReference type="FunCoup" id="Q8N8M0">
    <property type="interactions" value="9"/>
</dbReference>
<dbReference type="IntAct" id="Q8N8M0">
    <property type="interactions" value="8"/>
</dbReference>
<dbReference type="STRING" id="9606.ENSP00000300303"/>
<dbReference type="iPTMnet" id="Q8N8M0"/>
<dbReference type="PhosphoSitePlus" id="Q8N8M0"/>
<dbReference type="BioMuta" id="NAT16"/>
<dbReference type="DMDM" id="269849548"/>
<dbReference type="MassIVE" id="Q8N8M0"/>
<dbReference type="PaxDb" id="9606-ENSP00000300303"/>
<dbReference type="PeptideAtlas" id="Q8N8M0"/>
<dbReference type="ProteomicsDB" id="3613"/>
<dbReference type="ProteomicsDB" id="72436">
    <molecule id="Q8N8M0-1"/>
</dbReference>
<dbReference type="Antibodypedia" id="16722">
    <property type="antibodies" value="16 antibodies from 12 providers"/>
</dbReference>
<dbReference type="DNASU" id="375607"/>
<dbReference type="Ensembl" id="ENST00000300303.7">
    <molecule id="Q8N8M0-1"/>
    <property type="protein sequence ID" value="ENSP00000300303.2"/>
    <property type="gene ID" value="ENSG00000167011.9"/>
</dbReference>
<dbReference type="Ensembl" id="ENST00000443096.1">
    <molecule id="Q8N8M0-2"/>
    <property type="protein sequence ID" value="ENSP00000394435.1"/>
    <property type="gene ID" value="ENSG00000167011.9"/>
</dbReference>
<dbReference type="Ensembl" id="ENST00000455377.5">
    <molecule id="Q8N8M0-1"/>
    <property type="protein sequence ID" value="ENSP00000395125.1"/>
    <property type="gene ID" value="ENSG00000167011.9"/>
</dbReference>
<dbReference type="GeneID" id="375607"/>
<dbReference type="KEGG" id="hsa:375607"/>
<dbReference type="MANE-Select" id="ENST00000300303.7">
    <property type="protein sequence ID" value="ENSP00000300303.2"/>
    <property type="RefSeq nucleotide sequence ID" value="NM_198571.3"/>
    <property type="RefSeq protein sequence ID" value="NP_940973.2"/>
</dbReference>
<dbReference type="UCSC" id="uc003uxy.2">
    <molecule id="Q8N8M0-1"/>
    <property type="organism name" value="human"/>
</dbReference>
<dbReference type="AGR" id="HGNC:22030"/>
<dbReference type="CTD" id="375607"/>
<dbReference type="DisGeNET" id="375607"/>
<dbReference type="GeneCards" id="NAT16"/>
<dbReference type="HGNC" id="HGNC:22030">
    <property type="gene designation" value="NAT16"/>
</dbReference>
<dbReference type="HPA" id="ENSG00000167011">
    <property type="expression patterns" value="Group enriched (brain, pancreas, pituitary gland, retina, thyroid gland)"/>
</dbReference>
<dbReference type="MIM" id="615783">
    <property type="type" value="gene"/>
</dbReference>
<dbReference type="neXtProt" id="NX_Q8N8M0"/>
<dbReference type="OpenTargets" id="ENSG00000167011"/>
<dbReference type="PharmGKB" id="PA162380580"/>
<dbReference type="VEuPathDB" id="HostDB:ENSG00000167011"/>
<dbReference type="eggNOG" id="ENOG502QW73">
    <property type="taxonomic scope" value="Eukaryota"/>
</dbReference>
<dbReference type="GeneTree" id="ENSGT00390000016398"/>
<dbReference type="HOGENOM" id="CLU_074598_0_0_1"/>
<dbReference type="InParanoid" id="Q8N8M0"/>
<dbReference type="OMA" id="WHYLNID"/>
<dbReference type="OrthoDB" id="8889733at2759"/>
<dbReference type="PAN-GO" id="Q8N8M0">
    <property type="GO annotations" value="1 GO annotation based on evolutionary models"/>
</dbReference>
<dbReference type="PhylomeDB" id="Q8N8M0"/>
<dbReference type="TreeFam" id="TF331490"/>
<dbReference type="BRENDA" id="2.3.1.33">
    <property type="organism ID" value="2681"/>
</dbReference>
<dbReference type="PathwayCommons" id="Q8N8M0"/>
<dbReference type="SignaLink" id="Q8N8M0"/>
<dbReference type="BioGRID-ORCS" id="375607">
    <property type="hits" value="10 hits in 1140 CRISPR screens"/>
</dbReference>
<dbReference type="GenomeRNAi" id="375607"/>
<dbReference type="Pharos" id="Q8N8M0">
    <property type="development level" value="Tdark"/>
</dbReference>
<dbReference type="PRO" id="PR:Q8N8M0"/>
<dbReference type="Proteomes" id="UP000005640">
    <property type="component" value="Chromosome 7"/>
</dbReference>
<dbReference type="RNAct" id="Q8N8M0">
    <property type="molecule type" value="protein"/>
</dbReference>
<dbReference type="Bgee" id="ENSG00000167011">
    <property type="expression patterns" value="Expressed in cortical plate and 49 other cell types or tissues"/>
</dbReference>
<dbReference type="ExpressionAtlas" id="Q8N8M0">
    <property type="expression patterns" value="baseline and differential"/>
</dbReference>
<dbReference type="GO" id="GO:0016747">
    <property type="term" value="F:acyltransferase activity, transferring groups other than amino-acyl groups"/>
    <property type="evidence" value="ECO:0007669"/>
    <property type="project" value="InterPro"/>
</dbReference>
<dbReference type="FunFam" id="3.40.630.30:FF:000039">
    <property type="entry name" value="Probable N-acetyltransferase 16"/>
    <property type="match status" value="1"/>
</dbReference>
<dbReference type="Gene3D" id="3.40.630.30">
    <property type="match status" value="1"/>
</dbReference>
<dbReference type="InterPro" id="IPR016181">
    <property type="entry name" value="Acyl_CoA_acyltransferase"/>
</dbReference>
<dbReference type="InterPro" id="IPR000182">
    <property type="entry name" value="GNAT_dom"/>
</dbReference>
<dbReference type="InterPro" id="IPR056483">
    <property type="entry name" value="Hisat_C"/>
</dbReference>
<dbReference type="PANTHER" id="PTHR47403">
    <property type="entry name" value="LOC100145250 PROTEIN"/>
    <property type="match status" value="1"/>
</dbReference>
<dbReference type="PANTHER" id="PTHR47403:SF3">
    <property type="entry name" value="N-ACETYLTRANSFERASE 16-RELATED"/>
    <property type="match status" value="1"/>
</dbReference>
<dbReference type="Pfam" id="PF00583">
    <property type="entry name" value="Acetyltransf_1"/>
    <property type="match status" value="1"/>
</dbReference>
<dbReference type="Pfam" id="PF24066">
    <property type="entry name" value="Hisat_C"/>
    <property type="match status" value="1"/>
</dbReference>
<dbReference type="SUPFAM" id="SSF55729">
    <property type="entry name" value="Acyl-CoA N-acyltransferases (Nat)"/>
    <property type="match status" value="1"/>
</dbReference>
<dbReference type="PROSITE" id="PS51186">
    <property type="entry name" value="GNAT"/>
    <property type="match status" value="1"/>
</dbReference>
<comment type="function">
    <text evidence="5">Probable N-acetyltransferase. Shows only trace activity toward L-His and no N-acetyltransferase activity toward other amino acids. The physiological substrate of this enzyme is unknown.</text>
</comment>
<comment type="alternative products">
    <event type="alternative splicing"/>
    <isoform>
        <id>Q8N8M0-1</id>
        <name>1</name>
        <sequence type="displayed"/>
    </isoform>
    <isoform>
        <id>Q8N8M0-2</id>
        <name>2</name>
        <sequence type="described" ref="VSP_055771 VSP_055772"/>
    </isoform>
</comment>
<comment type="miscellaneous">
    <text evidence="7">NAT16 is the ortholog of the ectothermic vertebrates enzyme HISAT (AC I3J7Q8) responsible for the synthesis of N-acetyl-histidine (NAH). NAT16 protein, unlike fish HISAT, has only trace enzyme activity for NAH synthesis.</text>
</comment>
<organism>
    <name type="scientific">Homo sapiens</name>
    <name type="common">Human</name>
    <dbReference type="NCBI Taxonomy" id="9606"/>
    <lineage>
        <taxon>Eukaryota</taxon>
        <taxon>Metazoa</taxon>
        <taxon>Chordata</taxon>
        <taxon>Craniata</taxon>
        <taxon>Vertebrata</taxon>
        <taxon>Euteleostomi</taxon>
        <taxon>Mammalia</taxon>
        <taxon>Eutheria</taxon>
        <taxon>Euarchontoglires</taxon>
        <taxon>Primates</taxon>
        <taxon>Haplorrhini</taxon>
        <taxon>Catarrhini</taxon>
        <taxon>Hominidae</taxon>
        <taxon>Homo</taxon>
    </lineage>
</organism>
<gene>
    <name type="primary">NAT16</name>
    <name type="synonym">C7orf52</name>
</gene>
<evidence type="ECO:0000255" key="1">
    <source>
        <dbReference type="PROSITE-ProRule" id="PRU00532"/>
    </source>
</evidence>
<evidence type="ECO:0000256" key="2">
    <source>
        <dbReference type="SAM" id="MobiDB-lite"/>
    </source>
</evidence>
<evidence type="ECO:0000269" key="3">
    <source>
    </source>
</evidence>
<evidence type="ECO:0000269" key="4">
    <source>
    </source>
</evidence>
<evidence type="ECO:0000269" key="5">
    <source>
    </source>
</evidence>
<evidence type="ECO:0000303" key="6">
    <source>
    </source>
</evidence>
<evidence type="ECO:0000305" key="7">
    <source>
    </source>
</evidence>
<accession>Q8N8M0</accession>
<accession>B3KRS2</accession>
<accession>Q8NDR1</accession>
<proteinExistence type="evidence at protein level"/>
<feature type="chain" id="PRO_0000309189" description="Probable N-acetyltransferase 16">
    <location>
        <begin position="1"/>
        <end position="369"/>
    </location>
</feature>
<feature type="domain" description="N-acetyltransferase" evidence="1">
    <location>
        <begin position="53"/>
        <end position="188"/>
    </location>
</feature>
<feature type="region of interest" description="Disordered" evidence="2">
    <location>
        <begin position="1"/>
        <end position="49"/>
    </location>
</feature>
<feature type="compositionally biased region" description="Basic and acidic residues" evidence="2">
    <location>
        <begin position="15"/>
        <end position="26"/>
    </location>
</feature>
<feature type="splice variant" id="VSP_055771" description="In isoform 2." evidence="6">
    <original>IALESVNV</original>
    <variation>VSPGARPR</variation>
    <location>
        <begin position="105"/>
        <end position="112"/>
    </location>
</feature>
<feature type="splice variant" id="VSP_055772" description="In isoform 2." evidence="6">
    <location>
        <begin position="113"/>
        <end position="369"/>
    </location>
</feature>
<feature type="sequence variant" id="VAR_036903" description="In dbSNP:rs34985488." evidence="3 4">
    <original>F</original>
    <variation>S</variation>
    <location>
        <position position="63"/>
    </location>
</feature>
<sequence length="369" mass="40521">MKLEASCGTATSEVPKPEKKTARDAEPSSETRPQEVEAEPRSGSGPEAEAEPLDFVVATEREFEEVLAISGGIYGGLDYLPSRYHSWLRDPDRTVVLAKRNGGVIALESVNVIDAGETVLVEGLRVAPWERGKGVAGLLQRFCSQLVKRQHPGVKVARLTRDDQLGPRELKKYRLITKQGILLVRFNASALLAGLGARLAALRTSGTFSPLPTEAVSEAGGDVARLLLSPSVQRDVLPGGTIIQDWQPYRPSESNLRLLAAKGLEWRVDSRARPRVLTLCTRPFPIPHGGDGTWRYLNIDAFGSDGAQVQSQLLWHLQRQAPRLVGLNVMCQLFLEPQLWSQLADFCQVGLGLELVKGYTEQYLLEADI</sequence>
<keyword id="KW-0012">Acyltransferase</keyword>
<keyword id="KW-0025">Alternative splicing</keyword>
<keyword id="KW-1267">Proteomics identification</keyword>
<keyword id="KW-1185">Reference proteome</keyword>
<keyword id="KW-0808">Transferase</keyword>
<protein>
    <recommendedName>
        <fullName>Probable N-acetyltransferase 16</fullName>
        <ecNumber>2.3.1.-</ecNumber>
    </recommendedName>
</protein>
<reference key="1">
    <citation type="journal article" date="2004" name="Nat. Genet.">
        <title>Complete sequencing and characterization of 21,243 full-length human cDNAs.</title>
        <authorList>
            <person name="Ota T."/>
            <person name="Suzuki Y."/>
            <person name="Nishikawa T."/>
            <person name="Otsuki T."/>
            <person name="Sugiyama T."/>
            <person name="Irie R."/>
            <person name="Wakamatsu A."/>
            <person name="Hayashi K."/>
            <person name="Sato H."/>
            <person name="Nagai K."/>
            <person name="Kimura K."/>
            <person name="Makita H."/>
            <person name="Sekine M."/>
            <person name="Obayashi M."/>
            <person name="Nishi T."/>
            <person name="Shibahara T."/>
            <person name="Tanaka T."/>
            <person name="Ishii S."/>
            <person name="Yamamoto J."/>
            <person name="Saito K."/>
            <person name="Kawai Y."/>
            <person name="Isono Y."/>
            <person name="Nakamura Y."/>
            <person name="Nagahari K."/>
            <person name="Murakami K."/>
            <person name="Yasuda T."/>
            <person name="Iwayanagi T."/>
            <person name="Wagatsuma M."/>
            <person name="Shiratori A."/>
            <person name="Sudo H."/>
            <person name="Hosoiri T."/>
            <person name="Kaku Y."/>
            <person name="Kodaira H."/>
            <person name="Kondo H."/>
            <person name="Sugawara M."/>
            <person name="Takahashi M."/>
            <person name="Kanda K."/>
            <person name="Yokoi T."/>
            <person name="Furuya T."/>
            <person name="Kikkawa E."/>
            <person name="Omura Y."/>
            <person name="Abe K."/>
            <person name="Kamihara K."/>
            <person name="Katsuta N."/>
            <person name="Sato K."/>
            <person name="Tanikawa M."/>
            <person name="Yamazaki M."/>
            <person name="Ninomiya K."/>
            <person name="Ishibashi T."/>
            <person name="Yamashita H."/>
            <person name="Murakawa K."/>
            <person name="Fujimori K."/>
            <person name="Tanai H."/>
            <person name="Kimata M."/>
            <person name="Watanabe M."/>
            <person name="Hiraoka S."/>
            <person name="Chiba Y."/>
            <person name="Ishida S."/>
            <person name="Ono Y."/>
            <person name="Takiguchi S."/>
            <person name="Watanabe S."/>
            <person name="Yosida M."/>
            <person name="Hotuta T."/>
            <person name="Kusano J."/>
            <person name="Kanehori K."/>
            <person name="Takahashi-Fujii A."/>
            <person name="Hara H."/>
            <person name="Tanase T.-O."/>
            <person name="Nomura Y."/>
            <person name="Togiya S."/>
            <person name="Komai F."/>
            <person name="Hara R."/>
            <person name="Takeuchi K."/>
            <person name="Arita M."/>
            <person name="Imose N."/>
            <person name="Musashino K."/>
            <person name="Yuuki H."/>
            <person name="Oshima A."/>
            <person name="Sasaki N."/>
            <person name="Aotsuka S."/>
            <person name="Yoshikawa Y."/>
            <person name="Matsunawa H."/>
            <person name="Ichihara T."/>
            <person name="Shiohata N."/>
            <person name="Sano S."/>
            <person name="Moriya S."/>
            <person name="Momiyama H."/>
            <person name="Satoh N."/>
            <person name="Takami S."/>
            <person name="Terashima Y."/>
            <person name="Suzuki O."/>
            <person name="Nakagawa S."/>
            <person name="Senoh A."/>
            <person name="Mizoguchi H."/>
            <person name="Goto Y."/>
            <person name="Shimizu F."/>
            <person name="Wakebe H."/>
            <person name="Hishigaki H."/>
            <person name="Watanabe T."/>
            <person name="Sugiyama A."/>
            <person name="Takemoto M."/>
            <person name="Kawakami B."/>
            <person name="Yamazaki M."/>
            <person name="Watanabe K."/>
            <person name="Kumagai A."/>
            <person name="Itakura S."/>
            <person name="Fukuzumi Y."/>
            <person name="Fujimori Y."/>
            <person name="Komiyama M."/>
            <person name="Tashiro H."/>
            <person name="Tanigami A."/>
            <person name="Fujiwara T."/>
            <person name="Ono T."/>
            <person name="Yamada K."/>
            <person name="Fujii Y."/>
            <person name="Ozaki K."/>
            <person name="Hirao M."/>
            <person name="Ohmori Y."/>
            <person name="Kawabata A."/>
            <person name="Hikiji T."/>
            <person name="Kobatake N."/>
            <person name="Inagaki H."/>
            <person name="Ikema Y."/>
            <person name="Okamoto S."/>
            <person name="Okitani R."/>
            <person name="Kawakami T."/>
            <person name="Noguchi S."/>
            <person name="Itoh T."/>
            <person name="Shigeta K."/>
            <person name="Senba T."/>
            <person name="Matsumura K."/>
            <person name="Nakajima Y."/>
            <person name="Mizuno T."/>
            <person name="Morinaga M."/>
            <person name="Sasaki M."/>
            <person name="Togashi T."/>
            <person name="Oyama M."/>
            <person name="Hata H."/>
            <person name="Watanabe M."/>
            <person name="Komatsu T."/>
            <person name="Mizushima-Sugano J."/>
            <person name="Satoh T."/>
            <person name="Shirai Y."/>
            <person name="Takahashi Y."/>
            <person name="Nakagawa K."/>
            <person name="Okumura K."/>
            <person name="Nagase T."/>
            <person name="Nomura N."/>
            <person name="Kikuchi H."/>
            <person name="Masuho Y."/>
            <person name="Yamashita R."/>
            <person name="Nakai K."/>
            <person name="Yada T."/>
            <person name="Nakamura Y."/>
            <person name="Ohara O."/>
            <person name="Isogai T."/>
            <person name="Sugano S."/>
        </authorList>
    </citation>
    <scope>NUCLEOTIDE SEQUENCE [LARGE SCALE MRNA] (ISOFORMS 1 AND 2)</scope>
    <scope>VARIANT SER-63</scope>
    <source>
        <tissue>Brain</tissue>
    </source>
</reference>
<reference key="2">
    <citation type="journal article" date="2003" name="Nature">
        <title>The DNA sequence of human chromosome 7.</title>
        <authorList>
            <person name="Hillier L.W."/>
            <person name="Fulton R.S."/>
            <person name="Fulton L.A."/>
            <person name="Graves T.A."/>
            <person name="Pepin K.H."/>
            <person name="Wagner-McPherson C."/>
            <person name="Layman D."/>
            <person name="Maas J."/>
            <person name="Jaeger S."/>
            <person name="Walker R."/>
            <person name="Wylie K."/>
            <person name="Sekhon M."/>
            <person name="Becker M.C."/>
            <person name="O'Laughlin M.D."/>
            <person name="Schaller M.E."/>
            <person name="Fewell G.A."/>
            <person name="Delehaunty K.D."/>
            <person name="Miner T.L."/>
            <person name="Nash W.E."/>
            <person name="Cordes M."/>
            <person name="Du H."/>
            <person name="Sun H."/>
            <person name="Edwards J."/>
            <person name="Bradshaw-Cordum H."/>
            <person name="Ali J."/>
            <person name="Andrews S."/>
            <person name="Isak A."/>
            <person name="Vanbrunt A."/>
            <person name="Nguyen C."/>
            <person name="Du F."/>
            <person name="Lamar B."/>
            <person name="Courtney L."/>
            <person name="Kalicki J."/>
            <person name="Ozersky P."/>
            <person name="Bielicki L."/>
            <person name="Scott K."/>
            <person name="Holmes A."/>
            <person name="Harkins R."/>
            <person name="Harris A."/>
            <person name="Strong C.M."/>
            <person name="Hou S."/>
            <person name="Tomlinson C."/>
            <person name="Dauphin-Kohlberg S."/>
            <person name="Kozlowicz-Reilly A."/>
            <person name="Leonard S."/>
            <person name="Rohlfing T."/>
            <person name="Rock S.M."/>
            <person name="Tin-Wollam A.-M."/>
            <person name="Abbott A."/>
            <person name="Minx P."/>
            <person name="Maupin R."/>
            <person name="Strowmatt C."/>
            <person name="Latreille P."/>
            <person name="Miller N."/>
            <person name="Johnson D."/>
            <person name="Murray J."/>
            <person name="Woessner J.P."/>
            <person name="Wendl M.C."/>
            <person name="Yang S.-P."/>
            <person name="Schultz B.R."/>
            <person name="Wallis J.W."/>
            <person name="Spieth J."/>
            <person name="Bieri T.A."/>
            <person name="Nelson J.O."/>
            <person name="Berkowicz N."/>
            <person name="Wohldmann P.E."/>
            <person name="Cook L.L."/>
            <person name="Hickenbotham M.T."/>
            <person name="Eldred J."/>
            <person name="Williams D."/>
            <person name="Bedell J.A."/>
            <person name="Mardis E.R."/>
            <person name="Clifton S.W."/>
            <person name="Chissoe S.L."/>
            <person name="Marra M.A."/>
            <person name="Raymond C."/>
            <person name="Haugen E."/>
            <person name="Gillett W."/>
            <person name="Zhou Y."/>
            <person name="James R."/>
            <person name="Phelps K."/>
            <person name="Iadanoto S."/>
            <person name="Bubb K."/>
            <person name="Simms E."/>
            <person name="Levy R."/>
            <person name="Clendenning J."/>
            <person name="Kaul R."/>
            <person name="Kent W.J."/>
            <person name="Furey T.S."/>
            <person name="Baertsch R.A."/>
            <person name="Brent M.R."/>
            <person name="Keibler E."/>
            <person name="Flicek P."/>
            <person name="Bork P."/>
            <person name="Suyama M."/>
            <person name="Bailey J.A."/>
            <person name="Portnoy M.E."/>
            <person name="Torrents D."/>
            <person name="Chinwalla A.T."/>
            <person name="Gish W.R."/>
            <person name="Eddy S.R."/>
            <person name="McPherson J.D."/>
            <person name="Olson M.V."/>
            <person name="Eichler E.E."/>
            <person name="Green E.D."/>
            <person name="Waterston R.H."/>
            <person name="Wilson R.K."/>
        </authorList>
    </citation>
    <scope>NUCLEOTIDE SEQUENCE [LARGE SCALE GENOMIC DNA]</scope>
</reference>
<reference key="3">
    <citation type="journal article" date="2004" name="Genome Res.">
        <title>The status, quality, and expansion of the NIH full-length cDNA project: the Mammalian Gene Collection (MGC).</title>
        <authorList>
            <consortium name="The MGC Project Team"/>
        </authorList>
    </citation>
    <scope>NUCLEOTIDE SEQUENCE [LARGE SCALE MRNA] (ISOFORM 1)</scope>
    <scope>VARIANT SER-63</scope>
    <source>
        <tissue>Brain</tissue>
    </source>
</reference>
<reference key="4">
    <citation type="journal article" date="2007" name="BMC Genomics">
        <title>The full-ORF clone resource of the German cDNA consortium.</title>
        <authorList>
            <person name="Bechtel S."/>
            <person name="Rosenfelder H."/>
            <person name="Duda A."/>
            <person name="Schmidt C.P."/>
            <person name="Ernst U."/>
            <person name="Wellenreuther R."/>
            <person name="Mehrle A."/>
            <person name="Schuster C."/>
            <person name="Bahr A."/>
            <person name="Bloecker H."/>
            <person name="Heubner D."/>
            <person name="Hoerlein A."/>
            <person name="Michel G."/>
            <person name="Wedler H."/>
            <person name="Koehrer K."/>
            <person name="Ottenwaelder B."/>
            <person name="Poustka A."/>
            <person name="Wiemann S."/>
            <person name="Schupp I."/>
        </authorList>
    </citation>
    <scope>NUCLEOTIDE SEQUENCE [LARGE SCALE MRNA] OF 165-369 (ISOFORM 1)</scope>
    <source>
        <tissue>Brain</tissue>
    </source>
</reference>
<reference key="5">
    <citation type="journal article" date="2014" name="Biochim. Biophys. Acta">
        <title>An ectotherm homologue of human predicted gene NAT16 encodes histidine N-acetyltransferase responsible for Nalpha-acetylhistidine synthesis.</title>
        <authorList>
            <person name="Yamada S."/>
            <person name="Arikawa S."/>
        </authorList>
    </citation>
    <scope>FUNCTION</scope>
</reference>
<name>NAT16_HUMAN</name>